<keyword id="KW-0963">Cytoplasm</keyword>
<keyword id="KW-0255">Endonuclease</keyword>
<keyword id="KW-0378">Hydrolase</keyword>
<keyword id="KW-0479">Metal-binding</keyword>
<keyword id="KW-0540">Nuclease</keyword>
<keyword id="KW-0690">Ribosome biogenesis</keyword>
<keyword id="KW-0698">rRNA processing</keyword>
<keyword id="KW-0862">Zinc</keyword>
<proteinExistence type="inferred from homology"/>
<feature type="chain" id="PRO_0000102395" description="Endoribonuclease YbeY">
    <location>
        <begin position="1"/>
        <end position="159"/>
    </location>
</feature>
<feature type="binding site" evidence="1">
    <location>
        <position position="119"/>
    </location>
    <ligand>
        <name>Zn(2+)</name>
        <dbReference type="ChEBI" id="CHEBI:29105"/>
        <note>catalytic</note>
    </ligand>
</feature>
<feature type="binding site" evidence="1">
    <location>
        <position position="123"/>
    </location>
    <ligand>
        <name>Zn(2+)</name>
        <dbReference type="ChEBI" id="CHEBI:29105"/>
        <note>catalytic</note>
    </ligand>
</feature>
<feature type="binding site" evidence="1">
    <location>
        <position position="129"/>
    </location>
    <ligand>
        <name>Zn(2+)</name>
        <dbReference type="ChEBI" id="CHEBI:29105"/>
        <note>catalytic</note>
    </ligand>
</feature>
<name>YBEY_ACIAD</name>
<comment type="function">
    <text evidence="1">Single strand-specific metallo-endoribonuclease involved in late-stage 70S ribosome quality control and in maturation of the 3' terminus of the 16S rRNA.</text>
</comment>
<comment type="cofactor">
    <cofactor evidence="1">
        <name>Zn(2+)</name>
        <dbReference type="ChEBI" id="CHEBI:29105"/>
    </cofactor>
    <text evidence="1">Binds 1 zinc ion.</text>
</comment>
<comment type="subcellular location">
    <subcellularLocation>
        <location evidence="1">Cytoplasm</location>
    </subcellularLocation>
</comment>
<comment type="similarity">
    <text evidence="1">Belongs to the endoribonuclease YbeY family.</text>
</comment>
<reference key="1">
    <citation type="journal article" date="2004" name="Nucleic Acids Res.">
        <title>Unique features revealed by the genome sequence of Acinetobacter sp. ADP1, a versatile and naturally transformation competent bacterium.</title>
        <authorList>
            <person name="Barbe V."/>
            <person name="Vallenet D."/>
            <person name="Fonknechten N."/>
            <person name="Kreimeyer A."/>
            <person name="Oztas S."/>
            <person name="Labarre L."/>
            <person name="Cruveiller S."/>
            <person name="Robert C."/>
            <person name="Duprat S."/>
            <person name="Wincker P."/>
            <person name="Ornston L.N."/>
            <person name="Weissenbach J."/>
            <person name="Marliere P."/>
            <person name="Cohen G.N."/>
            <person name="Medigue C."/>
        </authorList>
    </citation>
    <scope>NUCLEOTIDE SEQUENCE [LARGE SCALE GENOMIC DNA]</scope>
    <source>
        <strain>ATCC 33305 / BD413 / ADP1</strain>
    </source>
</reference>
<accession>Q6F7W6</accession>
<organism>
    <name type="scientific">Acinetobacter baylyi (strain ATCC 33305 / BD413 / ADP1)</name>
    <dbReference type="NCBI Taxonomy" id="62977"/>
    <lineage>
        <taxon>Bacteria</taxon>
        <taxon>Pseudomonadati</taxon>
        <taxon>Pseudomonadota</taxon>
        <taxon>Gammaproteobacteria</taxon>
        <taxon>Moraxellales</taxon>
        <taxon>Moraxellaceae</taxon>
        <taxon>Acinetobacter</taxon>
    </lineage>
</organism>
<dbReference type="EC" id="3.1.-.-" evidence="1"/>
<dbReference type="EMBL" id="CR543861">
    <property type="protein sequence ID" value="CAG69849.1"/>
    <property type="molecule type" value="Genomic_DNA"/>
</dbReference>
<dbReference type="RefSeq" id="WP_004924255.1">
    <property type="nucleotide sequence ID" value="NC_005966.1"/>
</dbReference>
<dbReference type="SMR" id="Q6F7W6"/>
<dbReference type="STRING" id="202950.GCA_001485005_02994"/>
<dbReference type="GeneID" id="45235377"/>
<dbReference type="KEGG" id="aci:ACIAD3160"/>
<dbReference type="eggNOG" id="COG0319">
    <property type="taxonomic scope" value="Bacteria"/>
</dbReference>
<dbReference type="HOGENOM" id="CLU_106710_0_2_6"/>
<dbReference type="OrthoDB" id="9807740at2"/>
<dbReference type="BioCyc" id="ASP62977:ACIAD_RS14310-MONOMER"/>
<dbReference type="Proteomes" id="UP000000430">
    <property type="component" value="Chromosome"/>
</dbReference>
<dbReference type="GO" id="GO:0005737">
    <property type="term" value="C:cytoplasm"/>
    <property type="evidence" value="ECO:0007669"/>
    <property type="project" value="UniProtKB-SubCell"/>
</dbReference>
<dbReference type="GO" id="GO:0004222">
    <property type="term" value="F:metalloendopeptidase activity"/>
    <property type="evidence" value="ECO:0007669"/>
    <property type="project" value="InterPro"/>
</dbReference>
<dbReference type="GO" id="GO:0004521">
    <property type="term" value="F:RNA endonuclease activity"/>
    <property type="evidence" value="ECO:0007669"/>
    <property type="project" value="UniProtKB-UniRule"/>
</dbReference>
<dbReference type="GO" id="GO:0008270">
    <property type="term" value="F:zinc ion binding"/>
    <property type="evidence" value="ECO:0007669"/>
    <property type="project" value="UniProtKB-UniRule"/>
</dbReference>
<dbReference type="GO" id="GO:0006364">
    <property type="term" value="P:rRNA processing"/>
    <property type="evidence" value="ECO:0007669"/>
    <property type="project" value="UniProtKB-UniRule"/>
</dbReference>
<dbReference type="Gene3D" id="3.40.390.30">
    <property type="entry name" value="Metalloproteases ('zincins'), catalytic domain"/>
    <property type="match status" value="1"/>
</dbReference>
<dbReference type="HAMAP" id="MF_00009">
    <property type="entry name" value="Endoribonucl_YbeY"/>
    <property type="match status" value="1"/>
</dbReference>
<dbReference type="InterPro" id="IPR023091">
    <property type="entry name" value="MetalPrtase_cat_dom_sf_prd"/>
</dbReference>
<dbReference type="InterPro" id="IPR002036">
    <property type="entry name" value="YbeY"/>
</dbReference>
<dbReference type="InterPro" id="IPR020549">
    <property type="entry name" value="YbeY_CS"/>
</dbReference>
<dbReference type="NCBIfam" id="TIGR00043">
    <property type="entry name" value="rRNA maturation RNase YbeY"/>
    <property type="match status" value="1"/>
</dbReference>
<dbReference type="PANTHER" id="PTHR46986">
    <property type="entry name" value="ENDORIBONUCLEASE YBEY, CHLOROPLASTIC"/>
    <property type="match status" value="1"/>
</dbReference>
<dbReference type="PANTHER" id="PTHR46986:SF1">
    <property type="entry name" value="ENDORIBONUCLEASE YBEY, CHLOROPLASTIC"/>
    <property type="match status" value="1"/>
</dbReference>
<dbReference type="Pfam" id="PF02130">
    <property type="entry name" value="YbeY"/>
    <property type="match status" value="1"/>
</dbReference>
<dbReference type="SUPFAM" id="SSF55486">
    <property type="entry name" value="Metalloproteases ('zincins'), catalytic domain"/>
    <property type="match status" value="1"/>
</dbReference>
<dbReference type="PROSITE" id="PS01306">
    <property type="entry name" value="UPF0054"/>
    <property type="match status" value="1"/>
</dbReference>
<evidence type="ECO:0000255" key="1">
    <source>
        <dbReference type="HAMAP-Rule" id="MF_00009"/>
    </source>
</evidence>
<gene>
    <name evidence="1" type="primary">ybeY</name>
    <name type="ordered locus">ACIAD3160</name>
</gene>
<sequence>MKLNLSLQQAFKSPDLALKRAHIKKAIETTLDHVEVKTDSEIGIACVDHEQSHRLNLEYRGKDKSTNVLSFPSDIPEEVLPLLDARPLGDLVICIPVVLDEAIEQHKTAQAHFMHMLVHGTLHLLGYDHETSDEDAEEMEALEIEILAKLGLENPYQEQ</sequence>
<protein>
    <recommendedName>
        <fullName evidence="1">Endoribonuclease YbeY</fullName>
        <ecNumber evidence="1">3.1.-.-</ecNumber>
    </recommendedName>
</protein>